<evidence type="ECO:0000255" key="1">
    <source>
        <dbReference type="HAMAP-Rule" id="MF_00686"/>
    </source>
</evidence>
<reference key="1">
    <citation type="journal article" date="2009" name="Proc. Natl. Acad. Sci. U.S.A.">
        <title>Hamiltonella defensa, genome evolution of protective bacterial endosymbiont from pathogenic ancestors.</title>
        <authorList>
            <person name="Degnan P.H."/>
            <person name="Yu Y."/>
            <person name="Sisneros N."/>
            <person name="Wing R.A."/>
            <person name="Moran N.A."/>
        </authorList>
    </citation>
    <scope>NUCLEOTIDE SEQUENCE [LARGE SCALE GENOMIC DNA]</scope>
    <source>
        <strain>5AT</strain>
    </source>
</reference>
<dbReference type="EMBL" id="CP001277">
    <property type="protein sequence ID" value="ACQ67116.1"/>
    <property type="molecule type" value="Genomic_DNA"/>
</dbReference>
<dbReference type="RefSeq" id="WP_012738076.1">
    <property type="nucleotide sequence ID" value="NC_012751.1"/>
</dbReference>
<dbReference type="SMR" id="C4K3H3"/>
<dbReference type="STRING" id="572265.HDEF_0357"/>
<dbReference type="GeneID" id="66260269"/>
<dbReference type="KEGG" id="hde:HDEF_0357"/>
<dbReference type="eggNOG" id="COG2924">
    <property type="taxonomic scope" value="Bacteria"/>
</dbReference>
<dbReference type="HOGENOM" id="CLU_170994_0_0_6"/>
<dbReference type="Proteomes" id="UP000002334">
    <property type="component" value="Chromosome"/>
</dbReference>
<dbReference type="GO" id="GO:0005829">
    <property type="term" value="C:cytosol"/>
    <property type="evidence" value="ECO:0007669"/>
    <property type="project" value="TreeGrafter"/>
</dbReference>
<dbReference type="GO" id="GO:0005506">
    <property type="term" value="F:iron ion binding"/>
    <property type="evidence" value="ECO:0007669"/>
    <property type="project" value="UniProtKB-UniRule"/>
</dbReference>
<dbReference type="GO" id="GO:0034599">
    <property type="term" value="P:cellular response to oxidative stress"/>
    <property type="evidence" value="ECO:0007669"/>
    <property type="project" value="TreeGrafter"/>
</dbReference>
<dbReference type="FunFam" id="1.10.3880.10:FF:000001">
    <property type="entry name" value="Probable Fe(2+)-trafficking protein"/>
    <property type="match status" value="1"/>
</dbReference>
<dbReference type="Gene3D" id="1.10.3880.10">
    <property type="entry name" value="Fe(II) trafficking protein YggX"/>
    <property type="match status" value="1"/>
</dbReference>
<dbReference type="HAMAP" id="MF_00686">
    <property type="entry name" value="Fe_traffic_YggX"/>
    <property type="match status" value="1"/>
</dbReference>
<dbReference type="InterPro" id="IPR007457">
    <property type="entry name" value="Fe_traffick_prot_YggX"/>
</dbReference>
<dbReference type="InterPro" id="IPR036766">
    <property type="entry name" value="Fe_traffick_prot_YggX_sf"/>
</dbReference>
<dbReference type="NCBIfam" id="NF003817">
    <property type="entry name" value="PRK05408.1"/>
    <property type="match status" value="1"/>
</dbReference>
<dbReference type="PANTHER" id="PTHR36965">
    <property type="entry name" value="FE(2+)-TRAFFICKING PROTEIN-RELATED"/>
    <property type="match status" value="1"/>
</dbReference>
<dbReference type="PANTHER" id="PTHR36965:SF1">
    <property type="entry name" value="FE(2+)-TRAFFICKING PROTEIN-RELATED"/>
    <property type="match status" value="1"/>
</dbReference>
<dbReference type="Pfam" id="PF04362">
    <property type="entry name" value="Iron_traffic"/>
    <property type="match status" value="1"/>
</dbReference>
<dbReference type="PIRSF" id="PIRSF029827">
    <property type="entry name" value="Fe_traffic_YggX"/>
    <property type="match status" value="1"/>
</dbReference>
<dbReference type="SUPFAM" id="SSF111148">
    <property type="entry name" value="YggX-like"/>
    <property type="match status" value="1"/>
</dbReference>
<feature type="chain" id="PRO_1000212554" description="Probable Fe(2+)-trafficking protein">
    <location>
        <begin position="1"/>
        <end position="90"/>
    </location>
</feature>
<protein>
    <recommendedName>
        <fullName evidence="1">Probable Fe(2+)-trafficking protein</fullName>
    </recommendedName>
</protein>
<keyword id="KW-0408">Iron</keyword>
<comment type="function">
    <text evidence="1">Could be a mediator in iron transactions between iron acquisition and iron-requiring processes, such as synthesis and/or repair of Fe-S clusters in biosynthetic enzymes.</text>
</comment>
<comment type="subunit">
    <text evidence="1">Monomer.</text>
</comment>
<comment type="similarity">
    <text evidence="1">Belongs to the Fe(2+)-trafficking protein family.</text>
</comment>
<organism>
    <name type="scientific">Hamiltonella defensa subsp. Acyrthosiphon pisum (strain 5AT)</name>
    <dbReference type="NCBI Taxonomy" id="572265"/>
    <lineage>
        <taxon>Bacteria</taxon>
        <taxon>Pseudomonadati</taxon>
        <taxon>Pseudomonadota</taxon>
        <taxon>Gammaproteobacteria</taxon>
        <taxon>Enterobacterales</taxon>
        <taxon>Enterobacteriaceae</taxon>
        <taxon>aphid secondary symbionts</taxon>
        <taxon>Candidatus Hamiltonella</taxon>
    </lineage>
</organism>
<proteinExistence type="inferred from homology"/>
<sequence>MSRTIFCTFLKKEAIGQDFQIYPGDIGRRIYDDISQEAWSLWLNKQTMLINEKKLSMIHHEDRALLEREMIQFLFEGKDVHVSGYIPPKD</sequence>
<accession>C4K3H3</accession>
<gene>
    <name type="ordered locus">HDEF_0357</name>
</gene>
<name>FETP_HAMD5</name>